<dbReference type="EC" id="3.6.1.-" evidence="1"/>
<dbReference type="EMBL" id="AK173042">
    <property type="protein sequence ID" value="BAD32320.1"/>
    <property type="status" value="ALT_INIT"/>
    <property type="molecule type" value="mRNA"/>
</dbReference>
<dbReference type="EMBL" id="AL691413">
    <property type="status" value="NOT_ANNOTATED_CDS"/>
    <property type="molecule type" value="Genomic_DNA"/>
</dbReference>
<dbReference type="EMBL" id="BC063082">
    <property type="protein sequence ID" value="AAH63082.1"/>
    <property type="molecule type" value="mRNA"/>
</dbReference>
<dbReference type="CCDS" id="CCDS48741.1"/>
<dbReference type="RefSeq" id="NP_001152760.1">
    <property type="nucleotide sequence ID" value="NM_001159288.2"/>
</dbReference>
<dbReference type="RefSeq" id="NP_001350131.1">
    <property type="nucleotide sequence ID" value="NM_001363202.1"/>
</dbReference>
<dbReference type="RefSeq" id="XP_011242078.1">
    <property type="nucleotide sequence ID" value="XM_011243776.2"/>
</dbReference>
<dbReference type="SMR" id="Q69ZX6"/>
<dbReference type="BioGRID" id="216819">
    <property type="interactions" value="6"/>
</dbReference>
<dbReference type="FunCoup" id="Q69ZX6">
    <property type="interactions" value="4540"/>
</dbReference>
<dbReference type="IntAct" id="Q69ZX6">
    <property type="interactions" value="1"/>
</dbReference>
<dbReference type="MINT" id="Q69ZX6"/>
<dbReference type="STRING" id="10090.ENSMUSP00000094176"/>
<dbReference type="GlyGen" id="Q69ZX6">
    <property type="glycosylation" value="3 sites, 2 N-linked glycans (2 sites)"/>
</dbReference>
<dbReference type="iPTMnet" id="Q69ZX6"/>
<dbReference type="PhosphoSitePlus" id="Q69ZX6"/>
<dbReference type="jPOST" id="Q69ZX6"/>
<dbReference type="PaxDb" id="10090-ENSMUSP00000091087"/>
<dbReference type="PeptideAtlas" id="Q69ZX6"/>
<dbReference type="ProteomicsDB" id="252591"/>
<dbReference type="Pumba" id="Q69ZX6"/>
<dbReference type="Ensembl" id="ENSMUST00000093389.9">
    <property type="protein sequence ID" value="ENSMUSP00000091087.3"/>
    <property type="gene ID" value="ENSMUSG00000034543.16"/>
</dbReference>
<dbReference type="Ensembl" id="ENSMUST00000096441.5">
    <property type="protein sequence ID" value="ENSMUSP00000094176.4"/>
    <property type="gene ID" value="ENSMUSG00000034543.16"/>
</dbReference>
<dbReference type="GeneID" id="74522"/>
<dbReference type="KEGG" id="mmu:74522"/>
<dbReference type="UCSC" id="uc007htm.1">
    <property type="organism name" value="mouse"/>
</dbReference>
<dbReference type="AGR" id="MGI:1921772"/>
<dbReference type="CTD" id="74522"/>
<dbReference type="MGI" id="MGI:1921772">
    <property type="gene designation" value="Morc2a"/>
</dbReference>
<dbReference type="VEuPathDB" id="HostDB:ENSMUSG00000034543"/>
<dbReference type="eggNOG" id="KOG1845">
    <property type="taxonomic scope" value="Eukaryota"/>
</dbReference>
<dbReference type="GeneTree" id="ENSGT00940000153998"/>
<dbReference type="HOGENOM" id="CLU_011516_0_0_1"/>
<dbReference type="InParanoid" id="Q69ZX6"/>
<dbReference type="OMA" id="NFASKTF"/>
<dbReference type="OrthoDB" id="10251809at2759"/>
<dbReference type="PhylomeDB" id="Q69ZX6"/>
<dbReference type="TreeFam" id="TF329118"/>
<dbReference type="Reactome" id="R-MMU-75105">
    <property type="pathway name" value="Fatty acyl-CoA biosynthesis"/>
</dbReference>
<dbReference type="BioGRID-ORCS" id="74522">
    <property type="hits" value="6 hits in 78 CRISPR screens"/>
</dbReference>
<dbReference type="ChiTaRS" id="Morc2a">
    <property type="organism name" value="mouse"/>
</dbReference>
<dbReference type="PRO" id="PR:Q69ZX6"/>
<dbReference type="Proteomes" id="UP000000589">
    <property type="component" value="Chromosome 11"/>
</dbReference>
<dbReference type="RNAct" id="Q69ZX6">
    <property type="molecule type" value="protein"/>
</dbReference>
<dbReference type="Bgee" id="ENSMUSG00000034543">
    <property type="expression patterns" value="Expressed in embryonic post-anal tail and 236 other cell types or tissues"/>
</dbReference>
<dbReference type="ExpressionAtlas" id="Q69ZX6">
    <property type="expression patterns" value="baseline and differential"/>
</dbReference>
<dbReference type="GO" id="GO:0005737">
    <property type="term" value="C:cytoplasm"/>
    <property type="evidence" value="ECO:0000250"/>
    <property type="project" value="UniProtKB"/>
</dbReference>
<dbReference type="GO" id="GO:0005829">
    <property type="term" value="C:cytosol"/>
    <property type="evidence" value="ECO:0007669"/>
    <property type="project" value="UniProtKB-SubCell"/>
</dbReference>
<dbReference type="GO" id="GO:0000792">
    <property type="term" value="C:heterochromatin"/>
    <property type="evidence" value="ECO:0000250"/>
    <property type="project" value="UniProtKB"/>
</dbReference>
<dbReference type="GO" id="GO:0016363">
    <property type="term" value="C:nuclear matrix"/>
    <property type="evidence" value="ECO:0000250"/>
    <property type="project" value="UniProtKB"/>
</dbReference>
<dbReference type="GO" id="GO:0005634">
    <property type="term" value="C:nucleus"/>
    <property type="evidence" value="ECO:0000250"/>
    <property type="project" value="UniProtKB"/>
</dbReference>
<dbReference type="GO" id="GO:0005524">
    <property type="term" value="F:ATP binding"/>
    <property type="evidence" value="ECO:0000250"/>
    <property type="project" value="UniProtKB"/>
</dbReference>
<dbReference type="GO" id="GO:0016887">
    <property type="term" value="F:ATP hydrolysis activity"/>
    <property type="evidence" value="ECO:0007669"/>
    <property type="project" value="RHEA"/>
</dbReference>
<dbReference type="GO" id="GO:0003682">
    <property type="term" value="F:chromatin binding"/>
    <property type="evidence" value="ECO:0000250"/>
    <property type="project" value="UniProtKB"/>
</dbReference>
<dbReference type="GO" id="GO:0042393">
    <property type="term" value="F:histone binding"/>
    <property type="evidence" value="ECO:0000315"/>
    <property type="project" value="UniProtKB"/>
</dbReference>
<dbReference type="GO" id="GO:0000287">
    <property type="term" value="F:magnesium ion binding"/>
    <property type="evidence" value="ECO:0000250"/>
    <property type="project" value="UniProtKB"/>
</dbReference>
<dbReference type="GO" id="GO:0042803">
    <property type="term" value="F:protein homodimerization activity"/>
    <property type="evidence" value="ECO:0000250"/>
    <property type="project" value="UniProtKB"/>
</dbReference>
<dbReference type="GO" id="GO:0008270">
    <property type="term" value="F:zinc ion binding"/>
    <property type="evidence" value="ECO:0000250"/>
    <property type="project" value="UniProtKB"/>
</dbReference>
<dbReference type="GO" id="GO:0006338">
    <property type="term" value="P:chromatin remodeling"/>
    <property type="evidence" value="ECO:0000250"/>
    <property type="project" value="UniProtKB"/>
</dbReference>
<dbReference type="GO" id="GO:0140719">
    <property type="term" value="P:constitutive heterochromatin formation"/>
    <property type="evidence" value="ECO:0000250"/>
    <property type="project" value="UniProtKB"/>
</dbReference>
<dbReference type="GO" id="GO:0006974">
    <property type="term" value="P:DNA damage response"/>
    <property type="evidence" value="ECO:0000250"/>
    <property type="project" value="UniProtKB"/>
</dbReference>
<dbReference type="GO" id="GO:0141005">
    <property type="term" value="P:transposable element silencing by heterochromatin formation"/>
    <property type="evidence" value="ECO:0000315"/>
    <property type="project" value="UniProtKB"/>
</dbReference>
<dbReference type="CDD" id="cd16931">
    <property type="entry name" value="HATPase_MORC-like"/>
    <property type="match status" value="1"/>
</dbReference>
<dbReference type="FunFam" id="3.30.40.100:FF:000001">
    <property type="entry name" value="MORC family CW-type zinc finger protein 2"/>
    <property type="match status" value="1"/>
</dbReference>
<dbReference type="FunFam" id="3.30.565.10:FF:000027">
    <property type="entry name" value="MORC family CW-type zinc finger protein 2"/>
    <property type="match status" value="1"/>
</dbReference>
<dbReference type="Gene3D" id="3.30.40.100">
    <property type="match status" value="1"/>
</dbReference>
<dbReference type="Gene3D" id="3.30.565.10">
    <property type="entry name" value="Histidine kinase-like ATPase, C-terminal domain"/>
    <property type="match status" value="1"/>
</dbReference>
<dbReference type="InterPro" id="IPR056360">
    <property type="entry name" value="Chromo_MORC2_6th"/>
</dbReference>
<dbReference type="InterPro" id="IPR036890">
    <property type="entry name" value="HATPase_C_sf"/>
</dbReference>
<dbReference type="InterPro" id="IPR041006">
    <property type="entry name" value="Morc_S5"/>
</dbReference>
<dbReference type="InterPro" id="IPR011124">
    <property type="entry name" value="Znf_CW"/>
</dbReference>
<dbReference type="PANTHER" id="PTHR23337:SF7">
    <property type="entry name" value="ATPASE MORC2"/>
    <property type="match status" value="1"/>
</dbReference>
<dbReference type="PANTHER" id="PTHR23337">
    <property type="entry name" value="ZINC FINGER CW-TYPE COILED-COIL DOMAIN PROTEIN 1"/>
    <property type="match status" value="1"/>
</dbReference>
<dbReference type="Pfam" id="PF23327">
    <property type="entry name" value="Chromo_MORC2_6th"/>
    <property type="match status" value="1"/>
</dbReference>
<dbReference type="Pfam" id="PF13589">
    <property type="entry name" value="HATPase_c_3"/>
    <property type="match status" value="1"/>
</dbReference>
<dbReference type="Pfam" id="PF17942">
    <property type="entry name" value="Morc6_S5"/>
    <property type="match status" value="1"/>
</dbReference>
<dbReference type="Pfam" id="PF07496">
    <property type="entry name" value="zf-CW"/>
    <property type="match status" value="1"/>
</dbReference>
<dbReference type="SUPFAM" id="SSF55874">
    <property type="entry name" value="ATPase domain of HSP90 chaperone/DNA topoisomerase II/histidine kinase"/>
    <property type="match status" value="1"/>
</dbReference>
<dbReference type="PROSITE" id="PS51050">
    <property type="entry name" value="ZF_CW"/>
    <property type="match status" value="1"/>
</dbReference>
<reference evidence="10" key="1">
    <citation type="journal article" date="2004" name="DNA Res.">
        <title>Prediction of the coding sequences of mouse homologues of KIAA gene: IV. The complete nucleotide sequences of 500 mouse KIAA-homologous cDNAs identified by screening of terminal sequences of cDNA clones randomly sampled from size-fractionated libraries.</title>
        <authorList>
            <person name="Okazaki N."/>
            <person name="Kikuno R."/>
            <person name="Ohara R."/>
            <person name="Inamoto S."/>
            <person name="Koseki H."/>
            <person name="Hiraoka S."/>
            <person name="Saga Y."/>
            <person name="Seino S."/>
            <person name="Nishimura M."/>
            <person name="Kaisho T."/>
            <person name="Hoshino K."/>
            <person name="Kitamura H."/>
            <person name="Nagase T."/>
            <person name="Ohara O."/>
            <person name="Koga H."/>
        </authorList>
    </citation>
    <scope>NUCLEOTIDE SEQUENCE [LARGE SCALE MRNA]</scope>
    <source>
        <tissue evidence="10">Embryonic intestine</tissue>
    </source>
</reference>
<reference key="2">
    <citation type="journal article" date="2009" name="PLoS Biol.">
        <title>Lineage-specific biology revealed by a finished genome assembly of the mouse.</title>
        <authorList>
            <person name="Church D.M."/>
            <person name="Goodstadt L."/>
            <person name="Hillier L.W."/>
            <person name="Zody M.C."/>
            <person name="Goldstein S."/>
            <person name="She X."/>
            <person name="Bult C.J."/>
            <person name="Agarwala R."/>
            <person name="Cherry J.L."/>
            <person name="DiCuccio M."/>
            <person name="Hlavina W."/>
            <person name="Kapustin Y."/>
            <person name="Meric P."/>
            <person name="Maglott D."/>
            <person name="Birtle Z."/>
            <person name="Marques A.C."/>
            <person name="Graves T."/>
            <person name="Zhou S."/>
            <person name="Teague B."/>
            <person name="Potamousis K."/>
            <person name="Churas C."/>
            <person name="Place M."/>
            <person name="Herschleb J."/>
            <person name="Runnheim R."/>
            <person name="Forrest D."/>
            <person name="Amos-Landgraf J."/>
            <person name="Schwartz D.C."/>
            <person name="Cheng Z."/>
            <person name="Lindblad-Toh K."/>
            <person name="Eichler E.E."/>
            <person name="Ponting C.P."/>
        </authorList>
    </citation>
    <scope>NUCLEOTIDE SEQUENCE [LARGE SCALE GENOMIC DNA]</scope>
    <source>
        <strain>C57BL/6J</strain>
    </source>
</reference>
<reference evidence="8 9" key="3">
    <citation type="journal article" date="2004" name="Genome Res.">
        <title>The status, quality, and expansion of the NIH full-length cDNA project: the Mammalian Gene Collection (MGC).</title>
        <authorList>
            <consortium name="The MGC Project Team"/>
        </authorList>
    </citation>
    <scope>NUCLEOTIDE SEQUENCE [LARGE SCALE MRNA] OF 337-1030</scope>
    <source>
        <strain evidence="9">C57BL/6J</strain>
        <tissue evidence="9">Brain</tissue>
    </source>
</reference>
<reference key="4">
    <citation type="journal article" date="2009" name="Mol. Cell. Proteomics">
        <title>Large scale localization of protein phosphorylation by use of electron capture dissociation mass spectrometry.</title>
        <authorList>
            <person name="Sweet S.M."/>
            <person name="Bailey C.M."/>
            <person name="Cunningham D.L."/>
            <person name="Heath J.K."/>
            <person name="Cooper H.J."/>
        </authorList>
    </citation>
    <scope>PHOSPHORYLATION [LARGE SCALE ANALYSIS] AT SER-854</scope>
    <scope>IDENTIFICATION BY MASS SPECTROMETRY [LARGE SCALE ANALYSIS]</scope>
    <source>
        <tissue>Embryonic fibroblast</tissue>
    </source>
</reference>
<reference key="5">
    <citation type="journal article" date="2010" name="Cell">
        <title>A tissue-specific atlas of mouse protein phosphorylation and expression.</title>
        <authorList>
            <person name="Huttlin E.L."/>
            <person name="Jedrychowski M.P."/>
            <person name="Elias J.E."/>
            <person name="Goswami T."/>
            <person name="Rad R."/>
            <person name="Beausoleil S.A."/>
            <person name="Villen J."/>
            <person name="Haas W."/>
            <person name="Sowa M.E."/>
            <person name="Gygi S.P."/>
        </authorList>
    </citation>
    <scope>PHOSPHORYLATION [LARGE SCALE ANALYSIS] AT SER-737; SER-741; SER-775; THR-834; SER-854 AND SER-859</scope>
    <scope>IDENTIFICATION BY MASS SPECTROMETRY [LARGE SCALE ANALYSIS]</scope>
    <source>
        <tissue>Brain</tissue>
        <tissue>Brown adipose tissue</tissue>
        <tissue>Heart</tissue>
        <tissue>Kidney</tissue>
        <tissue>Liver</tissue>
        <tissue>Lung</tissue>
        <tissue>Pancreas</tissue>
        <tissue>Spleen</tissue>
        <tissue>Testis</tissue>
    </source>
</reference>
<reference key="6">
    <citation type="journal article" date="2016" name="Brain">
        <title>Mutations in the MORC2 gene cause axonal Charcot-Marie-Tooth disease.</title>
        <authorList>
            <person name="Sevilla T."/>
            <person name="Lupo V."/>
            <person name="Martinez-Rubio D."/>
            <person name="Sancho P."/>
            <person name="Sivera R."/>
            <person name="Chumillas M.J."/>
            <person name="Garcia-Romero M."/>
            <person name="Pascual-Pascual S.I."/>
            <person name="Muelas N."/>
            <person name="Dopazo J."/>
            <person name="Vilchez J.J."/>
            <person name="Palau F."/>
            <person name="Espinos C."/>
        </authorList>
    </citation>
    <scope>TISSUE SPECIFICITY</scope>
</reference>
<reference key="7">
    <citation type="journal article" date="2018" name="Genome Res.">
        <title>A CRISPR knockout screen identifies SETDB1-target retroelement silencing factors in embryonic stem cells.</title>
        <authorList>
            <person name="Fukuda K."/>
            <person name="Okuda A."/>
            <person name="Yusa K."/>
            <person name="Shinkai Y."/>
        </authorList>
    </citation>
    <scope>FUNCTION</scope>
    <scope>MUTAGENESIS OF 68-ASP-ASP-69</scope>
    <scope>INTERACTION WITH HISTONE H3</scope>
    <scope>SUBCELLULAR LOCATION</scope>
</reference>
<reference key="8">
    <citation type="journal article" date="2018" name="PLoS Genet.">
        <title>MORC2B is essential for meiotic progression and fertility.</title>
        <authorList>
            <person name="Shi B."/>
            <person name="Xue J."/>
            <person name="Zhou J."/>
            <person name="Kasowitz S.D."/>
            <person name="Zhang Y."/>
            <person name="Liang G."/>
            <person name="Guan Y."/>
            <person name="Shi Q."/>
            <person name="Liu M."/>
            <person name="Sha J."/>
            <person name="Huang X."/>
            <person name="Wang P.J."/>
        </authorList>
    </citation>
    <scope>INTERACTION WITH MORC2A</scope>
</reference>
<accession>Q69ZX6</accession>
<accession>Q5QNQ7</accession>
<accession>Q6P547</accession>
<protein>
    <recommendedName>
        <fullName evidence="8">ATPase MORC2A</fullName>
        <ecNumber evidence="1">3.6.1.-</ecNumber>
    </recommendedName>
    <alternativeName>
        <fullName>MORC family CW-type zinc finger protein 2A</fullName>
    </alternativeName>
    <alternativeName>
        <fullName>Zinc finger CW-type coiled-coil domain protein 1</fullName>
    </alternativeName>
</protein>
<name>MOR2A_MOUSE</name>
<feature type="initiator methionine" description="Removed" evidence="1">
    <location>
        <position position="1"/>
    </location>
</feature>
<feature type="chain" id="PRO_0000248243" description="ATPase MORC2A">
    <location>
        <begin position="2"/>
        <end position="1030"/>
    </location>
</feature>
<feature type="zinc finger region" description="CW-type" evidence="3">
    <location>
        <begin position="490"/>
        <end position="544"/>
    </location>
</feature>
<feature type="region of interest" description="Disordered" evidence="4">
    <location>
        <begin position="530"/>
        <end position="791"/>
    </location>
</feature>
<feature type="region of interest" description="Disordered" evidence="4">
    <location>
        <begin position="837"/>
        <end position="874"/>
    </location>
</feature>
<feature type="region of interest" description="Disordered" evidence="4">
    <location>
        <begin position="882"/>
        <end position="901"/>
    </location>
</feature>
<feature type="coiled-coil region" evidence="2">
    <location>
        <begin position="285"/>
        <end position="362"/>
    </location>
</feature>
<feature type="coiled-coil region" evidence="2">
    <location>
        <begin position="555"/>
        <end position="583"/>
    </location>
</feature>
<feature type="coiled-coil region" evidence="2">
    <location>
        <begin position="738"/>
        <end position="775"/>
    </location>
</feature>
<feature type="coiled-coil region" evidence="2">
    <location>
        <begin position="966"/>
        <end position="1011"/>
    </location>
</feature>
<feature type="compositionally biased region" description="Basic and acidic residues" evidence="4">
    <location>
        <begin position="532"/>
        <end position="543"/>
    </location>
</feature>
<feature type="compositionally biased region" description="Basic and acidic residues" evidence="4">
    <location>
        <begin position="550"/>
        <end position="577"/>
    </location>
</feature>
<feature type="compositionally biased region" description="Polar residues" evidence="4">
    <location>
        <begin position="629"/>
        <end position="646"/>
    </location>
</feature>
<feature type="compositionally biased region" description="Low complexity" evidence="4">
    <location>
        <begin position="693"/>
        <end position="702"/>
    </location>
</feature>
<feature type="compositionally biased region" description="Basic and acidic residues" evidence="4">
    <location>
        <begin position="763"/>
        <end position="772"/>
    </location>
</feature>
<feature type="compositionally biased region" description="Basic and acidic residues" evidence="4">
    <location>
        <begin position="779"/>
        <end position="791"/>
    </location>
</feature>
<feature type="compositionally biased region" description="Basic and acidic residues" evidence="4">
    <location>
        <begin position="837"/>
        <end position="849"/>
    </location>
</feature>
<feature type="compositionally biased region" description="Polar residues" evidence="4">
    <location>
        <begin position="856"/>
        <end position="865"/>
    </location>
</feature>
<feature type="binding site" evidence="1">
    <location>
        <position position="39"/>
    </location>
    <ligand>
        <name>ATP</name>
        <dbReference type="ChEBI" id="CHEBI:30616"/>
    </ligand>
</feature>
<feature type="binding site" evidence="1">
    <location>
        <position position="39"/>
    </location>
    <ligand>
        <name>Mg(2+)</name>
        <dbReference type="ChEBI" id="CHEBI:18420"/>
    </ligand>
</feature>
<feature type="binding site" evidence="1">
    <location>
        <begin position="87"/>
        <end position="89"/>
    </location>
    <ligand>
        <name>ATP</name>
        <dbReference type="ChEBI" id="CHEBI:30616"/>
    </ligand>
</feature>
<feature type="binding site" evidence="1">
    <location>
        <begin position="99"/>
        <end position="105"/>
    </location>
    <ligand>
        <name>ATP</name>
        <dbReference type="ChEBI" id="CHEBI:30616"/>
    </ligand>
</feature>
<feature type="binding site" evidence="1">
    <location>
        <position position="427"/>
    </location>
    <ligand>
        <name>ATP</name>
        <dbReference type="ChEBI" id="CHEBI:30616"/>
    </ligand>
</feature>
<feature type="binding site" evidence="3">
    <location>
        <position position="499"/>
    </location>
    <ligand>
        <name>Zn(2+)</name>
        <dbReference type="ChEBI" id="CHEBI:29105"/>
    </ligand>
</feature>
<feature type="binding site" evidence="3">
    <location>
        <position position="502"/>
    </location>
    <ligand>
        <name>Zn(2+)</name>
        <dbReference type="ChEBI" id="CHEBI:29105"/>
    </ligand>
</feature>
<feature type="binding site" evidence="3">
    <location>
        <position position="525"/>
    </location>
    <ligand>
        <name>Zn(2+)</name>
        <dbReference type="ChEBI" id="CHEBI:29105"/>
    </ligand>
</feature>
<feature type="binding site" evidence="3">
    <location>
        <position position="536"/>
    </location>
    <ligand>
        <name>Zn(2+)</name>
        <dbReference type="ChEBI" id="CHEBI:29105"/>
    </ligand>
</feature>
<feature type="modified residue" description="N-acetylalanine" evidence="1">
    <location>
        <position position="2"/>
    </location>
</feature>
<feature type="modified residue" description="Phosphothreonine" evidence="1">
    <location>
        <position position="582"/>
    </location>
</feature>
<feature type="modified residue" description="Phosphoserine" evidence="1">
    <location>
        <position position="614"/>
    </location>
</feature>
<feature type="modified residue" description="Phosphoserine" evidence="1">
    <location>
        <position position="703"/>
    </location>
</feature>
<feature type="modified residue" description="Phosphoserine" evidence="1">
    <location>
        <position position="728"/>
    </location>
</feature>
<feature type="modified residue" description="Phosphothreonine" evidence="1">
    <location>
        <position position="731"/>
    </location>
</feature>
<feature type="modified residue" description="Phosphoserine" evidence="13">
    <location>
        <position position="737"/>
    </location>
</feature>
<feature type="modified residue" description="Phosphoserine" evidence="13">
    <location>
        <position position="741"/>
    </location>
</feature>
<feature type="modified residue" description="Phosphoserine" evidence="13">
    <location>
        <position position="775"/>
    </location>
</feature>
<feature type="modified residue" description="Phosphoserine" evidence="1">
    <location>
        <position position="777"/>
    </location>
</feature>
<feature type="modified residue" description="Phosphothreonine" evidence="13">
    <location>
        <position position="834"/>
    </location>
</feature>
<feature type="modified residue" description="Phosphoserine" evidence="12 13">
    <location>
        <position position="854"/>
    </location>
</feature>
<feature type="modified residue" description="Phosphoserine" evidence="13">
    <location>
        <position position="859"/>
    </location>
</feature>
<feature type="cross-link" description="Glycyl lysine isopeptide (Lys-Gly) (interchain with G-Cter in SUMO2)" evidence="1">
    <location>
        <position position="650"/>
    </location>
</feature>
<feature type="cross-link" description="Glycyl lysine isopeptide (Lys-Gly) (interchain with G-Cter in SUMO2)" evidence="1">
    <location>
        <position position="702"/>
    </location>
</feature>
<feature type="cross-link" description="Glycyl lysine isopeptide (Lys-Gly) (interchain with G-Cter in SUMO2)" evidence="1">
    <location>
        <position position="714"/>
    </location>
</feature>
<feature type="cross-link" description="Glycyl lysine isopeptide (Lys-Gly) (interchain with G-Cter in SUMO2)" evidence="1">
    <location>
        <position position="765"/>
    </location>
</feature>
<feature type="cross-link" description="Glycyl lysine isopeptide (Lys-Gly) (interchain with G-Cter in SUMO2)" evidence="1">
    <location>
        <position position="817"/>
    </location>
</feature>
<feature type="cross-link" description="Glycyl lysine isopeptide (Lys-Gly) (interchain with G-Cter in SUMO2)" evidence="1">
    <location>
        <position position="930"/>
    </location>
</feature>
<feature type="mutagenesis site" description="Abolishes repression of germ cell-related genes and L1 retrotransposons." evidence="7">
    <original>DD</original>
    <variation>AA</variation>
    <location>
        <begin position="68"/>
        <end position="69"/>
    </location>
</feature>
<keyword id="KW-0007">Acetylation</keyword>
<keyword id="KW-0067">ATP-binding</keyword>
<keyword id="KW-0158">Chromosome</keyword>
<keyword id="KW-0175">Coiled coil</keyword>
<keyword id="KW-0963">Cytoplasm</keyword>
<keyword id="KW-0378">Hydrolase</keyword>
<keyword id="KW-1017">Isopeptide bond</keyword>
<keyword id="KW-0460">Magnesium</keyword>
<keyword id="KW-0479">Metal-binding</keyword>
<keyword id="KW-0547">Nucleotide-binding</keyword>
<keyword id="KW-0539">Nucleus</keyword>
<keyword id="KW-0597">Phosphoprotein</keyword>
<keyword id="KW-1185">Reference proteome</keyword>
<keyword id="KW-0832">Ubl conjugation</keyword>
<keyword id="KW-0862">Zinc</keyword>
<keyword id="KW-0863">Zinc-finger</keyword>
<gene>
    <name evidence="11" type="primary">Morc2a</name>
    <name evidence="10" type="synonym">Kiaa0852</name>
    <name evidence="11" type="synonym">Zcwcc1</name>
</gene>
<proteinExistence type="evidence at protein level"/>
<evidence type="ECO:0000250" key="1">
    <source>
        <dbReference type="UniProtKB" id="Q9Y6X9"/>
    </source>
</evidence>
<evidence type="ECO:0000255" key="2"/>
<evidence type="ECO:0000255" key="3">
    <source>
        <dbReference type="PROSITE-ProRule" id="PRU00454"/>
    </source>
</evidence>
<evidence type="ECO:0000256" key="4">
    <source>
        <dbReference type="SAM" id="MobiDB-lite"/>
    </source>
</evidence>
<evidence type="ECO:0000269" key="5">
    <source>
    </source>
</evidence>
<evidence type="ECO:0000269" key="6">
    <source>
    </source>
</evidence>
<evidence type="ECO:0000269" key="7">
    <source>
    </source>
</evidence>
<evidence type="ECO:0000305" key="8"/>
<evidence type="ECO:0000312" key="9">
    <source>
        <dbReference type="EMBL" id="AAH63082.1"/>
    </source>
</evidence>
<evidence type="ECO:0000312" key="10">
    <source>
        <dbReference type="EMBL" id="BAD32320.1"/>
    </source>
</evidence>
<evidence type="ECO:0000312" key="11">
    <source>
        <dbReference type="MGI" id="MGI:1921772"/>
    </source>
</evidence>
<evidence type="ECO:0007744" key="12">
    <source>
    </source>
</evidence>
<evidence type="ECO:0007744" key="13">
    <source>
    </source>
</evidence>
<organism>
    <name type="scientific">Mus musculus</name>
    <name type="common">Mouse</name>
    <dbReference type="NCBI Taxonomy" id="10090"/>
    <lineage>
        <taxon>Eukaryota</taxon>
        <taxon>Metazoa</taxon>
        <taxon>Chordata</taxon>
        <taxon>Craniata</taxon>
        <taxon>Vertebrata</taxon>
        <taxon>Euteleostomi</taxon>
        <taxon>Mammalia</taxon>
        <taxon>Eutheria</taxon>
        <taxon>Euarchontoglires</taxon>
        <taxon>Glires</taxon>
        <taxon>Rodentia</taxon>
        <taxon>Myomorpha</taxon>
        <taxon>Muroidea</taxon>
        <taxon>Muridae</taxon>
        <taxon>Murinae</taxon>
        <taxon>Mus</taxon>
        <taxon>Mus</taxon>
    </lineage>
</organism>
<sequence length="1030" mass="117330">MAFTNYSSLNRAQLTFEYLHTNSTTHEFLFGALAELVDNARDADATRIDIYAERREDLRGGFMLCFLDDGAGMDPSDAASVIQFGKSAKRTPESTQIGQYGNGLKSGSMRIGKDFILFTKKEDTMTCLFLSRTFHEEEGIDEVIVPLPTWNARTREPITDNVEKFAIETELVYKYSPFHTEEQVMNQFMKIPGNSGTLVIIFNLKLMDNGEPELDIISNPKDIQMAETSPEGTKPERRSFRAYAAVLYIDPRMRIFIHGHKVQTKRLSCCLYKPRMYKYTSSRFKTRAEQEVKKAEHVARIAEEKAREAESKARTLEVRMGGDLTRDSRVMLRQVQNTAITLRREADVKKRIKDAKQRALKEPKELNFVFGVNIEHRDLDGMFIYNCSRLIKMYEKVGPQLEGGMACGGVVGVVDVPYLVLEPTHNKQDFADAKEYRHLLRAMGEHLAQYWKDIAIAQRGIIKFWDEFGYLSANWNQPPSSELRFKRRRAMEIPTTIQCDLCLKWRTLPFQLSSVETDYPDTWVCSMNPDPEQDRCEASEQKQKVPLGTLKKDPKTQEEKQKQLTEKIRQQQEKLEALQKTTPIRSQADLKKLPLEVTTRPIEEPVRRPQRPRSPPLPAVIKNAPSRPPSIQTPRPSTQLRKTSVISLPKPPTTAARGETSTSRLLQPTEAPRKPANPPIKTVPRPTPPVHTPPLSLIPSSKSLREVPAQKAIKTPVVKKPEPPVKQSVATSGRKRSLAVSDEEEAEEEAEKRRERCKRGKLAVKEEKKEANELSDSAGEDHPAELRKAQKDKGLHVEVRVNREWYTGRVTAVEVGKNAVRWKVKFDYVPTDTTPRDRWVEKGSEDVRLMKPPSPEHQSPDTQQEGGEEEEAMVARQAVALPEPSTSDGLPIEPDTTATSPSHETIDLLVQILRNCLRYFLPPSFPISKKELSVMNSEELISFPLKEYFKQYEVGLQNLCHSYQSRADSRAKASEESLRTSEKKLRETEEKLQKLRTNIVALLQKVQEDIDINTDDELDAYIEDLITKGD</sequence>
<comment type="function">
    <text evidence="1 7">Essential for epigenetic silencing by the HUSH complex. Recruited by HUSH to target site in heterochromatin, the ATPase activity and homodimerization are critical for HUSH-mediated silencing (By similarity). Represses germ cell-related genes and L1 retrotransposons in collaboration with SETDB1 and the HUSH complex, the silencing is dependent of repressive epigenetic modifications, such as H3K9me3 mark (PubMed:29728365). Silencing events often occur within introns of transcriptionally active genes, and lead to the down-regulation of host gene expression. During DNA damage response, regulates chromatin remodeling through ATP hydrolysis (By similarity). During DNA damage response, may regulate chromatin remodeling through ATP hydrolysis (By similarity).</text>
</comment>
<comment type="catalytic activity">
    <reaction evidence="1">
        <text>ATP + H2O = ADP + phosphate + H(+)</text>
        <dbReference type="Rhea" id="RHEA:13065"/>
        <dbReference type="ChEBI" id="CHEBI:15377"/>
        <dbReference type="ChEBI" id="CHEBI:15378"/>
        <dbReference type="ChEBI" id="CHEBI:30616"/>
        <dbReference type="ChEBI" id="CHEBI:43474"/>
        <dbReference type="ChEBI" id="CHEBI:456216"/>
    </reaction>
</comment>
<comment type="activity regulation">
    <text evidence="1">ATPase activity is dependent of phosphorylation by PAK1 and presence of DNA.</text>
</comment>
<comment type="subunit">
    <text evidence="1 6 7">Homodimerizes upon ATP-binding and dissociate upon ATP hydrolysis; homodimerization is required for gene silencing (By similarity). Binds histone H3 independently of the methylation status at 'Lys-9' (PubMed:29728365). Interacts with HDAC4. Interacts with FAM208A/TASOR and MPHOSPH8; the interactions associate MORC2 with the HUSH complex which recruits MORC2 to heterochromatic loci (By similarity). Interacts with Morc2b (PubMed:29329290).</text>
</comment>
<comment type="subcellular location">
    <subcellularLocation>
        <location evidence="7">Nucleus</location>
    </subcellularLocation>
    <subcellularLocation>
        <location evidence="1">Cytoplasm</location>
        <location evidence="1">Cytosol</location>
    </subcellularLocation>
    <subcellularLocation>
        <location evidence="1">Chromosome</location>
    </subcellularLocation>
    <subcellularLocation>
        <location evidence="1">Nucleus matrix</location>
    </subcellularLocation>
    <text evidence="1">Mainly located in the nucleus. Upon phosphorylation at Ser-737, recruited to damaged chromatin.</text>
</comment>
<comment type="tissue specificity">
    <text evidence="5 6">Expressed in the axons and Schwann cells of peripheral nerves. Expressed in testes (PubMed:29329290).</text>
</comment>
<comment type="PTM">
    <text evidence="1">Phosphorylated by PAK1 at Ser-737 upon DNA damage. Phosphorylation is required for ATPase activity and recruitment to damaged chromatin.</text>
</comment>
<comment type="sequence caution" evidence="8">
    <conflict type="erroneous initiation">
        <sequence resource="EMBL-CDS" id="BAD32320"/>
    </conflict>
    <text>Extended N-terminus.</text>
</comment>